<dbReference type="EMBL" id="AAFI02000020">
    <property type="protein sequence ID" value="EAL68650.1"/>
    <property type="molecule type" value="Genomic_DNA"/>
</dbReference>
<dbReference type="RefSeq" id="XP_642563.1">
    <property type="nucleotide sequence ID" value="XM_637471.1"/>
</dbReference>
<dbReference type="SMR" id="Q86KL7"/>
<dbReference type="FunCoup" id="Q86KL7">
    <property type="interactions" value="877"/>
</dbReference>
<dbReference type="PaxDb" id="44689-DDB0218005"/>
<dbReference type="EnsemblProtists" id="EAL68650">
    <property type="protein sequence ID" value="EAL68650"/>
    <property type="gene ID" value="DDB_G0277665"/>
</dbReference>
<dbReference type="GeneID" id="8621125"/>
<dbReference type="KEGG" id="ddi:DDB_G0277665"/>
<dbReference type="dictyBase" id="DDB_G0277665"/>
<dbReference type="VEuPathDB" id="AmoebaDB:DDB_G0277665"/>
<dbReference type="eggNOG" id="ENOG502RIA7">
    <property type="taxonomic scope" value="Eukaryota"/>
</dbReference>
<dbReference type="HOGENOM" id="CLU_1743929_0_0_1"/>
<dbReference type="InParanoid" id="Q86KL7"/>
<dbReference type="PRO" id="PR:Q86KL7"/>
<dbReference type="Proteomes" id="UP000002195">
    <property type="component" value="Chromosome 2"/>
</dbReference>
<dbReference type="GO" id="GO:0016020">
    <property type="term" value="C:membrane"/>
    <property type="evidence" value="ECO:0007669"/>
    <property type="project" value="UniProtKB-SubCell"/>
</dbReference>
<sequence>MIKTLIIIIVSVIVGYLISHFNILNFVISSLIEVTVINNKKVIVGAIVGQALIYFFVFFLPLSSVANQIVKEESSTNYRVNPPKTPSLVGNLYLQQQLQQQQQQQQQLQQQQQQQQQSHHQPILNTATPFTLQNHLIPNPSIKTTQYNIK</sequence>
<accession>Q86KL7</accession>
<accession>Q54ZD4</accession>
<keyword id="KW-0472">Membrane</keyword>
<keyword id="KW-1185">Reference proteome</keyword>
<keyword id="KW-0812">Transmembrane</keyword>
<keyword id="KW-1133">Transmembrane helix</keyword>
<name>Y8005_DICDI</name>
<gene>
    <name type="ORF">DDB_G0277665</name>
</gene>
<protein>
    <recommendedName>
        <fullName>Putative transmembrane protein DDB_G0277665</fullName>
    </recommendedName>
</protein>
<organism>
    <name type="scientific">Dictyostelium discoideum</name>
    <name type="common">Social amoeba</name>
    <dbReference type="NCBI Taxonomy" id="44689"/>
    <lineage>
        <taxon>Eukaryota</taxon>
        <taxon>Amoebozoa</taxon>
        <taxon>Evosea</taxon>
        <taxon>Eumycetozoa</taxon>
        <taxon>Dictyostelia</taxon>
        <taxon>Dictyosteliales</taxon>
        <taxon>Dictyosteliaceae</taxon>
        <taxon>Dictyostelium</taxon>
    </lineage>
</organism>
<comment type="subcellular location">
    <subcellularLocation>
        <location evidence="2">Membrane</location>
        <topology evidence="2">Multi-pass membrane protein</topology>
    </subcellularLocation>
</comment>
<proteinExistence type="predicted"/>
<reference key="1">
    <citation type="journal article" date="2002" name="Nature">
        <title>Sequence and analysis of chromosome 2 of Dictyostelium discoideum.</title>
        <authorList>
            <person name="Gloeckner G."/>
            <person name="Eichinger L."/>
            <person name="Szafranski K."/>
            <person name="Pachebat J.A."/>
            <person name="Bankier A.T."/>
            <person name="Dear P.H."/>
            <person name="Lehmann R."/>
            <person name="Baumgart C."/>
            <person name="Parra G."/>
            <person name="Abril J.F."/>
            <person name="Guigo R."/>
            <person name="Kumpf K."/>
            <person name="Tunggal B."/>
            <person name="Cox E.C."/>
            <person name="Quail M.A."/>
            <person name="Platzer M."/>
            <person name="Rosenthal A."/>
            <person name="Noegel A.A."/>
        </authorList>
    </citation>
    <scope>NUCLEOTIDE SEQUENCE [LARGE SCALE GENOMIC DNA]</scope>
    <source>
        <strain>AX4</strain>
    </source>
</reference>
<reference key="2">
    <citation type="journal article" date="2005" name="Nature">
        <title>The genome of the social amoeba Dictyostelium discoideum.</title>
        <authorList>
            <person name="Eichinger L."/>
            <person name="Pachebat J.A."/>
            <person name="Gloeckner G."/>
            <person name="Rajandream M.A."/>
            <person name="Sucgang R."/>
            <person name="Berriman M."/>
            <person name="Song J."/>
            <person name="Olsen R."/>
            <person name="Szafranski K."/>
            <person name="Xu Q."/>
            <person name="Tunggal B."/>
            <person name="Kummerfeld S."/>
            <person name="Madera M."/>
            <person name="Konfortov B.A."/>
            <person name="Rivero F."/>
            <person name="Bankier A.T."/>
            <person name="Lehmann R."/>
            <person name="Hamlin N."/>
            <person name="Davies R."/>
            <person name="Gaudet P."/>
            <person name="Fey P."/>
            <person name="Pilcher K."/>
            <person name="Chen G."/>
            <person name="Saunders D."/>
            <person name="Sodergren E.J."/>
            <person name="Davis P."/>
            <person name="Kerhornou A."/>
            <person name="Nie X."/>
            <person name="Hall N."/>
            <person name="Anjard C."/>
            <person name="Hemphill L."/>
            <person name="Bason N."/>
            <person name="Farbrother P."/>
            <person name="Desany B."/>
            <person name="Just E."/>
            <person name="Morio T."/>
            <person name="Rost R."/>
            <person name="Churcher C.M."/>
            <person name="Cooper J."/>
            <person name="Haydock S."/>
            <person name="van Driessche N."/>
            <person name="Cronin A."/>
            <person name="Goodhead I."/>
            <person name="Muzny D.M."/>
            <person name="Mourier T."/>
            <person name="Pain A."/>
            <person name="Lu M."/>
            <person name="Harper D."/>
            <person name="Lindsay R."/>
            <person name="Hauser H."/>
            <person name="James K.D."/>
            <person name="Quiles M."/>
            <person name="Madan Babu M."/>
            <person name="Saito T."/>
            <person name="Buchrieser C."/>
            <person name="Wardroper A."/>
            <person name="Felder M."/>
            <person name="Thangavelu M."/>
            <person name="Johnson D."/>
            <person name="Knights A."/>
            <person name="Loulseged H."/>
            <person name="Mungall K.L."/>
            <person name="Oliver K."/>
            <person name="Price C."/>
            <person name="Quail M.A."/>
            <person name="Urushihara H."/>
            <person name="Hernandez J."/>
            <person name="Rabbinowitsch E."/>
            <person name="Steffen D."/>
            <person name="Sanders M."/>
            <person name="Ma J."/>
            <person name="Kohara Y."/>
            <person name="Sharp S."/>
            <person name="Simmonds M.N."/>
            <person name="Spiegler S."/>
            <person name="Tivey A."/>
            <person name="Sugano S."/>
            <person name="White B."/>
            <person name="Walker D."/>
            <person name="Woodward J.R."/>
            <person name="Winckler T."/>
            <person name="Tanaka Y."/>
            <person name="Shaulsky G."/>
            <person name="Schleicher M."/>
            <person name="Weinstock G.M."/>
            <person name="Rosenthal A."/>
            <person name="Cox E.C."/>
            <person name="Chisholm R.L."/>
            <person name="Gibbs R.A."/>
            <person name="Loomis W.F."/>
            <person name="Platzer M."/>
            <person name="Kay R.R."/>
            <person name="Williams J.G."/>
            <person name="Dear P.H."/>
            <person name="Noegel A.A."/>
            <person name="Barrell B.G."/>
            <person name="Kuspa A."/>
        </authorList>
    </citation>
    <scope>NUCLEOTIDE SEQUENCE [LARGE SCALE GENOMIC DNA]</scope>
    <source>
        <strain>AX4</strain>
    </source>
</reference>
<evidence type="ECO:0000255" key="1"/>
<evidence type="ECO:0000305" key="2"/>
<feature type="chain" id="PRO_0000348150" description="Putative transmembrane protein DDB_G0277665">
    <location>
        <begin position="1"/>
        <end position="150"/>
    </location>
</feature>
<feature type="transmembrane region" description="Helical" evidence="1">
    <location>
        <begin position="4"/>
        <end position="24"/>
    </location>
</feature>
<feature type="transmembrane region" description="Helical" evidence="1">
    <location>
        <begin position="42"/>
        <end position="62"/>
    </location>
</feature>